<comment type="subcellular location">
    <subcellularLocation>
        <location evidence="1">Cell inner membrane</location>
        <topology evidence="1">Multi-pass membrane protein</topology>
    </subcellularLocation>
</comment>
<comment type="similarity">
    <text evidence="1">Belongs to the UPF0060 family.</text>
</comment>
<keyword id="KW-0997">Cell inner membrane</keyword>
<keyword id="KW-1003">Cell membrane</keyword>
<keyword id="KW-0472">Membrane</keyword>
<keyword id="KW-0812">Transmembrane</keyword>
<keyword id="KW-1133">Transmembrane helix</keyword>
<dbReference type="EMBL" id="CP001069">
    <property type="protein sequence ID" value="ACD29232.1"/>
    <property type="molecule type" value="Genomic_DNA"/>
</dbReference>
<dbReference type="STRING" id="402626.Rpic_4131"/>
<dbReference type="KEGG" id="rpi:Rpic_4131"/>
<dbReference type="eggNOG" id="COG1742">
    <property type="taxonomic scope" value="Bacteria"/>
</dbReference>
<dbReference type="HOGENOM" id="CLU_117653_2_0_4"/>
<dbReference type="GO" id="GO:0005886">
    <property type="term" value="C:plasma membrane"/>
    <property type="evidence" value="ECO:0007669"/>
    <property type="project" value="UniProtKB-SubCell"/>
</dbReference>
<dbReference type="HAMAP" id="MF_00010">
    <property type="entry name" value="UPF0060"/>
    <property type="match status" value="1"/>
</dbReference>
<dbReference type="InterPro" id="IPR003844">
    <property type="entry name" value="UPF0060"/>
</dbReference>
<dbReference type="NCBIfam" id="NF002586">
    <property type="entry name" value="PRK02237.1"/>
    <property type="match status" value="1"/>
</dbReference>
<dbReference type="PANTHER" id="PTHR36116">
    <property type="entry name" value="UPF0060 MEMBRANE PROTEIN YNFA"/>
    <property type="match status" value="1"/>
</dbReference>
<dbReference type="PANTHER" id="PTHR36116:SF1">
    <property type="entry name" value="UPF0060 MEMBRANE PROTEIN YNFA"/>
    <property type="match status" value="1"/>
</dbReference>
<dbReference type="Pfam" id="PF02694">
    <property type="entry name" value="UPF0060"/>
    <property type="match status" value="1"/>
</dbReference>
<dbReference type="SUPFAM" id="SSF103481">
    <property type="entry name" value="Multidrug resistance efflux transporter EmrE"/>
    <property type="match status" value="1"/>
</dbReference>
<feature type="chain" id="PRO_1000089250" description="UPF0060 membrane protein Rpic_4131">
    <location>
        <begin position="1"/>
        <end position="110"/>
    </location>
</feature>
<feature type="transmembrane region" description="Helical" evidence="1">
    <location>
        <begin position="8"/>
        <end position="28"/>
    </location>
</feature>
<feature type="transmembrane region" description="Helical" evidence="1">
    <location>
        <begin position="33"/>
        <end position="53"/>
    </location>
</feature>
<feature type="transmembrane region" description="Helical" evidence="1">
    <location>
        <begin position="65"/>
        <end position="85"/>
    </location>
</feature>
<feature type="transmembrane region" description="Helical" evidence="1">
    <location>
        <begin position="88"/>
        <end position="108"/>
    </location>
</feature>
<evidence type="ECO:0000255" key="1">
    <source>
        <dbReference type="HAMAP-Rule" id="MF_00010"/>
    </source>
</evidence>
<sequence>MELLRIAVLFAFTAVAEIVGCYLPWLVLRQGKPFWLLLPAAASLALFAWLLTLHPAAAGRTYAAYGGVYIAVALVWLRLVDGVALTRWDVGGAAIALTGMAVIALQPQAN</sequence>
<name>Y4131_RALPJ</name>
<reference key="1">
    <citation type="submission" date="2008-05" db="EMBL/GenBank/DDBJ databases">
        <title>Complete sequence of chromosome 2 of Ralstonia pickettii 12J.</title>
        <authorList>
            <person name="Lucas S."/>
            <person name="Copeland A."/>
            <person name="Lapidus A."/>
            <person name="Glavina del Rio T."/>
            <person name="Dalin E."/>
            <person name="Tice H."/>
            <person name="Bruce D."/>
            <person name="Goodwin L."/>
            <person name="Pitluck S."/>
            <person name="Meincke L."/>
            <person name="Brettin T."/>
            <person name="Detter J.C."/>
            <person name="Han C."/>
            <person name="Kuske C.R."/>
            <person name="Schmutz J."/>
            <person name="Larimer F."/>
            <person name="Land M."/>
            <person name="Hauser L."/>
            <person name="Kyrpides N."/>
            <person name="Mikhailova N."/>
            <person name="Marsh T."/>
            <person name="Richardson P."/>
        </authorList>
    </citation>
    <scope>NUCLEOTIDE SEQUENCE [LARGE SCALE GENOMIC DNA]</scope>
    <source>
        <strain>12J</strain>
    </source>
</reference>
<organism>
    <name type="scientific">Ralstonia pickettii (strain 12J)</name>
    <dbReference type="NCBI Taxonomy" id="402626"/>
    <lineage>
        <taxon>Bacteria</taxon>
        <taxon>Pseudomonadati</taxon>
        <taxon>Pseudomonadota</taxon>
        <taxon>Betaproteobacteria</taxon>
        <taxon>Burkholderiales</taxon>
        <taxon>Burkholderiaceae</taxon>
        <taxon>Ralstonia</taxon>
    </lineage>
</organism>
<gene>
    <name type="ordered locus">Rpic_4131</name>
</gene>
<accession>B2UI31</accession>
<protein>
    <recommendedName>
        <fullName evidence="1">UPF0060 membrane protein Rpic_4131</fullName>
    </recommendedName>
</protein>
<proteinExistence type="inferred from homology"/>